<gene>
    <name evidence="1" type="primary">uppP</name>
    <name type="ordered locus">Rfer_1829</name>
</gene>
<accession>Q21XE6</accession>
<protein>
    <recommendedName>
        <fullName evidence="1">Undecaprenyl-diphosphatase</fullName>
        <ecNumber evidence="1">3.6.1.27</ecNumber>
    </recommendedName>
    <alternativeName>
        <fullName evidence="1">Bacitracin resistance protein</fullName>
    </alternativeName>
    <alternativeName>
        <fullName evidence="1">Undecaprenyl pyrophosphate phosphatase</fullName>
    </alternativeName>
</protein>
<feature type="chain" id="PRO_0000250255" description="Undecaprenyl-diphosphatase">
    <location>
        <begin position="1"/>
        <end position="277"/>
    </location>
</feature>
<feature type="transmembrane region" description="Helical" evidence="1">
    <location>
        <begin position="3"/>
        <end position="23"/>
    </location>
</feature>
<feature type="transmembrane region" description="Helical" evidence="1">
    <location>
        <begin position="43"/>
        <end position="63"/>
    </location>
</feature>
<feature type="transmembrane region" description="Helical" evidence="1">
    <location>
        <begin position="85"/>
        <end position="105"/>
    </location>
</feature>
<feature type="transmembrane region" description="Helical" evidence="1">
    <location>
        <begin position="109"/>
        <end position="129"/>
    </location>
</feature>
<feature type="transmembrane region" description="Helical" evidence="1">
    <location>
        <begin position="189"/>
        <end position="209"/>
    </location>
</feature>
<feature type="transmembrane region" description="Helical" evidence="1">
    <location>
        <begin position="218"/>
        <end position="238"/>
    </location>
</feature>
<feature type="transmembrane region" description="Helical" evidence="1">
    <location>
        <begin position="249"/>
        <end position="269"/>
    </location>
</feature>
<organism>
    <name type="scientific">Albidiferax ferrireducens (strain ATCC BAA-621 / DSM 15236 / T118)</name>
    <name type="common">Rhodoferax ferrireducens</name>
    <dbReference type="NCBI Taxonomy" id="338969"/>
    <lineage>
        <taxon>Bacteria</taxon>
        <taxon>Pseudomonadati</taxon>
        <taxon>Pseudomonadota</taxon>
        <taxon>Betaproteobacteria</taxon>
        <taxon>Burkholderiales</taxon>
        <taxon>Comamonadaceae</taxon>
        <taxon>Rhodoferax</taxon>
    </lineage>
</organism>
<dbReference type="EC" id="3.6.1.27" evidence="1"/>
<dbReference type="EMBL" id="CP000267">
    <property type="protein sequence ID" value="ABD69557.1"/>
    <property type="molecule type" value="Genomic_DNA"/>
</dbReference>
<dbReference type="RefSeq" id="WP_011464125.1">
    <property type="nucleotide sequence ID" value="NC_007908.1"/>
</dbReference>
<dbReference type="SMR" id="Q21XE6"/>
<dbReference type="STRING" id="338969.Rfer_1829"/>
<dbReference type="KEGG" id="rfr:Rfer_1829"/>
<dbReference type="eggNOG" id="COG1968">
    <property type="taxonomic scope" value="Bacteria"/>
</dbReference>
<dbReference type="HOGENOM" id="CLU_060296_2_0_4"/>
<dbReference type="OrthoDB" id="9808289at2"/>
<dbReference type="Proteomes" id="UP000008332">
    <property type="component" value="Chromosome"/>
</dbReference>
<dbReference type="GO" id="GO:0005886">
    <property type="term" value="C:plasma membrane"/>
    <property type="evidence" value="ECO:0007669"/>
    <property type="project" value="UniProtKB-SubCell"/>
</dbReference>
<dbReference type="GO" id="GO:0050380">
    <property type="term" value="F:undecaprenyl-diphosphatase activity"/>
    <property type="evidence" value="ECO:0007669"/>
    <property type="project" value="UniProtKB-UniRule"/>
</dbReference>
<dbReference type="GO" id="GO:0071555">
    <property type="term" value="P:cell wall organization"/>
    <property type="evidence" value="ECO:0007669"/>
    <property type="project" value="UniProtKB-KW"/>
</dbReference>
<dbReference type="GO" id="GO:0009252">
    <property type="term" value="P:peptidoglycan biosynthetic process"/>
    <property type="evidence" value="ECO:0007669"/>
    <property type="project" value="UniProtKB-KW"/>
</dbReference>
<dbReference type="GO" id="GO:0008360">
    <property type="term" value="P:regulation of cell shape"/>
    <property type="evidence" value="ECO:0007669"/>
    <property type="project" value="UniProtKB-KW"/>
</dbReference>
<dbReference type="GO" id="GO:0046677">
    <property type="term" value="P:response to antibiotic"/>
    <property type="evidence" value="ECO:0007669"/>
    <property type="project" value="UniProtKB-UniRule"/>
</dbReference>
<dbReference type="HAMAP" id="MF_01006">
    <property type="entry name" value="Undec_diphosphatase"/>
    <property type="match status" value="1"/>
</dbReference>
<dbReference type="InterPro" id="IPR003824">
    <property type="entry name" value="UppP"/>
</dbReference>
<dbReference type="NCBIfam" id="NF001389">
    <property type="entry name" value="PRK00281.1-2"/>
    <property type="match status" value="1"/>
</dbReference>
<dbReference type="NCBIfam" id="NF001390">
    <property type="entry name" value="PRK00281.1-4"/>
    <property type="match status" value="1"/>
</dbReference>
<dbReference type="NCBIfam" id="TIGR00753">
    <property type="entry name" value="undec_PP_bacA"/>
    <property type="match status" value="1"/>
</dbReference>
<dbReference type="PANTHER" id="PTHR30622">
    <property type="entry name" value="UNDECAPRENYL-DIPHOSPHATASE"/>
    <property type="match status" value="1"/>
</dbReference>
<dbReference type="PANTHER" id="PTHR30622:SF3">
    <property type="entry name" value="UNDECAPRENYL-DIPHOSPHATASE"/>
    <property type="match status" value="1"/>
</dbReference>
<dbReference type="Pfam" id="PF02673">
    <property type="entry name" value="BacA"/>
    <property type="match status" value="1"/>
</dbReference>
<keyword id="KW-0046">Antibiotic resistance</keyword>
<keyword id="KW-0997">Cell inner membrane</keyword>
<keyword id="KW-1003">Cell membrane</keyword>
<keyword id="KW-0133">Cell shape</keyword>
<keyword id="KW-0961">Cell wall biogenesis/degradation</keyword>
<keyword id="KW-0378">Hydrolase</keyword>
<keyword id="KW-0472">Membrane</keyword>
<keyword id="KW-0573">Peptidoglycan synthesis</keyword>
<keyword id="KW-1185">Reference proteome</keyword>
<keyword id="KW-0812">Transmembrane</keyword>
<keyword id="KW-1133">Transmembrane helix</keyword>
<reference key="1">
    <citation type="submission" date="2006-02" db="EMBL/GenBank/DDBJ databases">
        <title>Complete sequence of chromosome of Rhodoferax ferrireducens DSM 15236.</title>
        <authorList>
            <person name="Copeland A."/>
            <person name="Lucas S."/>
            <person name="Lapidus A."/>
            <person name="Barry K."/>
            <person name="Detter J.C."/>
            <person name="Glavina del Rio T."/>
            <person name="Hammon N."/>
            <person name="Israni S."/>
            <person name="Pitluck S."/>
            <person name="Brettin T."/>
            <person name="Bruce D."/>
            <person name="Han C."/>
            <person name="Tapia R."/>
            <person name="Gilna P."/>
            <person name="Kiss H."/>
            <person name="Schmutz J."/>
            <person name="Larimer F."/>
            <person name="Land M."/>
            <person name="Kyrpides N."/>
            <person name="Ivanova N."/>
            <person name="Richardson P."/>
        </authorList>
    </citation>
    <scope>NUCLEOTIDE SEQUENCE [LARGE SCALE GENOMIC DNA]</scope>
    <source>
        <strain>ATCC BAA-621 / DSM 15236 / T118</strain>
    </source>
</reference>
<name>UPPP_ALBFT</name>
<proteinExistence type="inferred from homology"/>
<evidence type="ECO:0000255" key="1">
    <source>
        <dbReference type="HAMAP-Rule" id="MF_01006"/>
    </source>
</evidence>
<comment type="function">
    <text evidence="1">Catalyzes the dephosphorylation of undecaprenyl diphosphate (UPP). Confers resistance to bacitracin.</text>
</comment>
<comment type="catalytic activity">
    <reaction evidence="1">
        <text>di-trans,octa-cis-undecaprenyl diphosphate + H2O = di-trans,octa-cis-undecaprenyl phosphate + phosphate + H(+)</text>
        <dbReference type="Rhea" id="RHEA:28094"/>
        <dbReference type="ChEBI" id="CHEBI:15377"/>
        <dbReference type="ChEBI" id="CHEBI:15378"/>
        <dbReference type="ChEBI" id="CHEBI:43474"/>
        <dbReference type="ChEBI" id="CHEBI:58405"/>
        <dbReference type="ChEBI" id="CHEBI:60392"/>
        <dbReference type="EC" id="3.6.1.27"/>
    </reaction>
</comment>
<comment type="subcellular location">
    <subcellularLocation>
        <location evidence="1">Cell inner membrane</location>
        <topology evidence="1">Multi-pass membrane protein</topology>
    </subcellularLocation>
</comment>
<comment type="miscellaneous">
    <text>Bacitracin is thought to be involved in the inhibition of peptidoglycan synthesis by sequestering undecaprenyl diphosphate, thereby reducing the pool of lipid carrier available.</text>
</comment>
<comment type="similarity">
    <text evidence="1">Belongs to the UppP family.</text>
</comment>
<sequence length="277" mass="29913">MDIVLLIKAAIMGLVEGLTEFLPISSTGHLILAGTLLGFDNEVGKVFDIAIQTGAIFAVILVYWQKIRDTLVALPTEKQAQRFSLNVLIAFVPAVVLGLLFGKAIKAHLFTPVVVASTFIIGGFIILWAERRQEKNPAAVRIHDVESMTPMDALKVGLAQCLAMIPGTSRSGATIIGGMLLGLSRKAATDFSFYLAIPTLIGAGVYSLFKERALLSMADLPTFAVGLVVSFFSAWLCIRWLLRYIASHSFVGFAYYRIVFGVVVLATAWSGAVTWAA</sequence>